<feature type="chain" id="PRO_0000104615" description="Large ribosomal subunit protein uL30">
    <location>
        <begin position="1"/>
        <end position="67"/>
    </location>
</feature>
<name>RL30_THEMA</name>
<proteinExistence type="inferred from homology"/>
<comment type="subunit">
    <text evidence="1">Part of the 50S ribosomal subunit.</text>
</comment>
<comment type="similarity">
    <text evidence="1">Belongs to the universal ribosomal protein uL30 family.</text>
</comment>
<keyword id="KW-1185">Reference proteome</keyword>
<keyword id="KW-0687">Ribonucleoprotein</keyword>
<keyword id="KW-0689">Ribosomal protein</keyword>
<accession>Q9X1J1</accession>
<evidence type="ECO:0000255" key="1">
    <source>
        <dbReference type="HAMAP-Rule" id="MF_01371"/>
    </source>
</evidence>
<evidence type="ECO:0000305" key="2"/>
<gene>
    <name evidence="1" type="primary">rpmD</name>
    <name type="ordered locus">TM_1482</name>
</gene>
<sequence>MPKKLKIKLVKSPIGYSWDQKDTVKRLGLKKLNQVVIKDDLPQIRGMIRKVKHLVEVEEIEEGGSNA</sequence>
<organism>
    <name type="scientific">Thermotoga maritima (strain ATCC 43589 / DSM 3109 / JCM 10099 / NBRC 100826 / MSB8)</name>
    <dbReference type="NCBI Taxonomy" id="243274"/>
    <lineage>
        <taxon>Bacteria</taxon>
        <taxon>Thermotogati</taxon>
        <taxon>Thermotogota</taxon>
        <taxon>Thermotogae</taxon>
        <taxon>Thermotogales</taxon>
        <taxon>Thermotogaceae</taxon>
        <taxon>Thermotoga</taxon>
    </lineage>
</organism>
<protein>
    <recommendedName>
        <fullName evidence="1">Large ribosomal subunit protein uL30</fullName>
    </recommendedName>
    <alternativeName>
        <fullName evidence="2">50S ribosomal protein L30</fullName>
    </alternativeName>
</protein>
<dbReference type="EMBL" id="AE000512">
    <property type="protein sequence ID" value="AAD36548.1"/>
    <property type="molecule type" value="Genomic_DNA"/>
</dbReference>
<dbReference type="PIR" id="B72248">
    <property type="entry name" value="B72248"/>
</dbReference>
<dbReference type="RefSeq" id="NP_229282.1">
    <property type="nucleotide sequence ID" value="NC_000853.1"/>
</dbReference>
<dbReference type="RefSeq" id="WP_004081798.1">
    <property type="nucleotide sequence ID" value="NC_000853.1"/>
</dbReference>
<dbReference type="SMR" id="Q9X1J1"/>
<dbReference type="FunCoup" id="Q9X1J1">
    <property type="interactions" value="256"/>
</dbReference>
<dbReference type="STRING" id="243274.TM_1482"/>
<dbReference type="PaxDb" id="243274-THEMA_06890"/>
<dbReference type="EnsemblBacteria" id="AAD36548">
    <property type="protein sequence ID" value="AAD36548"/>
    <property type="gene ID" value="TM_1482"/>
</dbReference>
<dbReference type="KEGG" id="tma:TM1482"/>
<dbReference type="KEGG" id="tmi:THEMA_06890"/>
<dbReference type="KEGG" id="tmm:Tmari_1490"/>
<dbReference type="KEGG" id="tmw:THMA_1514"/>
<dbReference type="eggNOG" id="COG1841">
    <property type="taxonomic scope" value="Bacteria"/>
</dbReference>
<dbReference type="InParanoid" id="Q9X1J1"/>
<dbReference type="OrthoDB" id="9812790at2"/>
<dbReference type="Proteomes" id="UP000008183">
    <property type="component" value="Chromosome"/>
</dbReference>
<dbReference type="GO" id="GO:0022625">
    <property type="term" value="C:cytosolic large ribosomal subunit"/>
    <property type="evidence" value="ECO:0000318"/>
    <property type="project" value="GO_Central"/>
</dbReference>
<dbReference type="GO" id="GO:0003735">
    <property type="term" value="F:structural constituent of ribosome"/>
    <property type="evidence" value="ECO:0007669"/>
    <property type="project" value="InterPro"/>
</dbReference>
<dbReference type="GO" id="GO:0006412">
    <property type="term" value="P:translation"/>
    <property type="evidence" value="ECO:0007669"/>
    <property type="project" value="UniProtKB-UniRule"/>
</dbReference>
<dbReference type="CDD" id="cd01658">
    <property type="entry name" value="Ribosomal_L30"/>
    <property type="match status" value="1"/>
</dbReference>
<dbReference type="FunFam" id="3.30.1390.20:FF:000001">
    <property type="entry name" value="50S ribosomal protein L30"/>
    <property type="match status" value="1"/>
</dbReference>
<dbReference type="Gene3D" id="3.30.1390.20">
    <property type="entry name" value="Ribosomal protein L30, ferredoxin-like fold domain"/>
    <property type="match status" value="1"/>
</dbReference>
<dbReference type="HAMAP" id="MF_01371_B">
    <property type="entry name" value="Ribosomal_uL30_B"/>
    <property type="match status" value="1"/>
</dbReference>
<dbReference type="InterPro" id="IPR036919">
    <property type="entry name" value="Ribo_uL30_ferredoxin-like_sf"/>
</dbReference>
<dbReference type="InterPro" id="IPR005996">
    <property type="entry name" value="Ribosomal_uL30_bac-type"/>
</dbReference>
<dbReference type="InterPro" id="IPR018038">
    <property type="entry name" value="Ribosomal_uL30_CS"/>
</dbReference>
<dbReference type="InterPro" id="IPR016082">
    <property type="entry name" value="Ribosomal_uL30_ferredoxin-like"/>
</dbReference>
<dbReference type="NCBIfam" id="TIGR01308">
    <property type="entry name" value="rpmD_bact"/>
    <property type="match status" value="1"/>
</dbReference>
<dbReference type="PANTHER" id="PTHR15892:SF2">
    <property type="entry name" value="LARGE RIBOSOMAL SUBUNIT PROTEIN UL30M"/>
    <property type="match status" value="1"/>
</dbReference>
<dbReference type="PANTHER" id="PTHR15892">
    <property type="entry name" value="MITOCHONDRIAL RIBOSOMAL PROTEIN L30"/>
    <property type="match status" value="1"/>
</dbReference>
<dbReference type="Pfam" id="PF00327">
    <property type="entry name" value="Ribosomal_L30"/>
    <property type="match status" value="1"/>
</dbReference>
<dbReference type="PIRSF" id="PIRSF002211">
    <property type="entry name" value="Ribosomal_L30_bac-type"/>
    <property type="match status" value="1"/>
</dbReference>
<dbReference type="SUPFAM" id="SSF55129">
    <property type="entry name" value="Ribosomal protein L30p/L7e"/>
    <property type="match status" value="1"/>
</dbReference>
<dbReference type="PROSITE" id="PS00634">
    <property type="entry name" value="RIBOSOMAL_L30"/>
    <property type="match status" value="1"/>
</dbReference>
<reference key="1">
    <citation type="journal article" date="1999" name="Nature">
        <title>Evidence for lateral gene transfer between Archaea and Bacteria from genome sequence of Thermotoga maritima.</title>
        <authorList>
            <person name="Nelson K.E."/>
            <person name="Clayton R.A."/>
            <person name="Gill S.R."/>
            <person name="Gwinn M.L."/>
            <person name="Dodson R.J."/>
            <person name="Haft D.H."/>
            <person name="Hickey E.K."/>
            <person name="Peterson J.D."/>
            <person name="Nelson W.C."/>
            <person name="Ketchum K.A."/>
            <person name="McDonald L.A."/>
            <person name="Utterback T.R."/>
            <person name="Malek J.A."/>
            <person name="Linher K.D."/>
            <person name="Garrett M.M."/>
            <person name="Stewart A.M."/>
            <person name="Cotton M.D."/>
            <person name="Pratt M.S."/>
            <person name="Phillips C.A."/>
            <person name="Richardson D.L."/>
            <person name="Heidelberg J.F."/>
            <person name="Sutton G.G."/>
            <person name="Fleischmann R.D."/>
            <person name="Eisen J.A."/>
            <person name="White O."/>
            <person name="Salzberg S.L."/>
            <person name="Smith H.O."/>
            <person name="Venter J.C."/>
            <person name="Fraser C.M."/>
        </authorList>
    </citation>
    <scope>NUCLEOTIDE SEQUENCE [LARGE SCALE GENOMIC DNA]</scope>
    <source>
        <strain>ATCC 43589 / DSM 3109 / JCM 10099 / NBRC 100826 / MSB8</strain>
    </source>
</reference>